<gene>
    <name evidence="1" type="primary">guaA</name>
    <name type="ordered locus">VS_0629</name>
</gene>
<reference key="1">
    <citation type="submission" date="2009-02" db="EMBL/GenBank/DDBJ databases">
        <title>Vibrio splendidus str. LGP32 complete genome.</title>
        <authorList>
            <person name="Mazel D."/>
            <person name="Le Roux F."/>
        </authorList>
    </citation>
    <scope>NUCLEOTIDE SEQUENCE [LARGE SCALE GENOMIC DNA]</scope>
    <source>
        <strain>LGP32</strain>
    </source>
</reference>
<organism>
    <name type="scientific">Vibrio atlanticus (strain LGP32)</name>
    <name type="common">Vibrio splendidus (strain Mel32)</name>
    <dbReference type="NCBI Taxonomy" id="575788"/>
    <lineage>
        <taxon>Bacteria</taxon>
        <taxon>Pseudomonadati</taxon>
        <taxon>Pseudomonadota</taxon>
        <taxon>Gammaproteobacteria</taxon>
        <taxon>Vibrionales</taxon>
        <taxon>Vibrionaceae</taxon>
        <taxon>Vibrio</taxon>
    </lineage>
</organism>
<protein>
    <recommendedName>
        <fullName evidence="1">GMP synthase [glutamine-hydrolyzing]</fullName>
        <ecNumber evidence="1">6.3.5.2</ecNumber>
    </recommendedName>
    <alternativeName>
        <fullName evidence="1">GMP synthetase</fullName>
    </alternativeName>
    <alternativeName>
        <fullName evidence="1">Glutamine amidotransferase</fullName>
    </alternativeName>
</protein>
<dbReference type="EC" id="6.3.5.2" evidence="1"/>
<dbReference type="EMBL" id="FM954972">
    <property type="protein sequence ID" value="CAV17624.1"/>
    <property type="molecule type" value="Genomic_DNA"/>
</dbReference>
<dbReference type="SMR" id="B7VJU8"/>
<dbReference type="STRING" id="575788.VS_0629"/>
<dbReference type="MEROPS" id="C26.957"/>
<dbReference type="KEGG" id="vsp:VS_0629"/>
<dbReference type="PATRIC" id="fig|575788.5.peg.1981"/>
<dbReference type="eggNOG" id="COG0518">
    <property type="taxonomic scope" value="Bacteria"/>
</dbReference>
<dbReference type="eggNOG" id="COG0519">
    <property type="taxonomic scope" value="Bacteria"/>
</dbReference>
<dbReference type="HOGENOM" id="CLU_014340_0_5_6"/>
<dbReference type="UniPathway" id="UPA00189">
    <property type="reaction ID" value="UER00296"/>
</dbReference>
<dbReference type="Proteomes" id="UP000009100">
    <property type="component" value="Chromosome 1"/>
</dbReference>
<dbReference type="GO" id="GO:0005829">
    <property type="term" value="C:cytosol"/>
    <property type="evidence" value="ECO:0007669"/>
    <property type="project" value="TreeGrafter"/>
</dbReference>
<dbReference type="GO" id="GO:0005524">
    <property type="term" value="F:ATP binding"/>
    <property type="evidence" value="ECO:0007669"/>
    <property type="project" value="UniProtKB-UniRule"/>
</dbReference>
<dbReference type="GO" id="GO:0003921">
    <property type="term" value="F:GMP synthase activity"/>
    <property type="evidence" value="ECO:0007669"/>
    <property type="project" value="InterPro"/>
</dbReference>
<dbReference type="CDD" id="cd01742">
    <property type="entry name" value="GATase1_GMP_Synthase"/>
    <property type="match status" value="1"/>
</dbReference>
<dbReference type="CDD" id="cd01997">
    <property type="entry name" value="GMP_synthase_C"/>
    <property type="match status" value="1"/>
</dbReference>
<dbReference type="FunFam" id="3.30.300.10:FF:000002">
    <property type="entry name" value="GMP synthase [glutamine-hydrolyzing]"/>
    <property type="match status" value="1"/>
</dbReference>
<dbReference type="FunFam" id="3.40.50.620:FF:000001">
    <property type="entry name" value="GMP synthase [glutamine-hydrolyzing]"/>
    <property type="match status" value="1"/>
</dbReference>
<dbReference type="FunFam" id="3.40.50.880:FF:000001">
    <property type="entry name" value="GMP synthase [glutamine-hydrolyzing]"/>
    <property type="match status" value="1"/>
</dbReference>
<dbReference type="Gene3D" id="3.30.300.10">
    <property type="match status" value="1"/>
</dbReference>
<dbReference type="Gene3D" id="3.40.50.880">
    <property type="match status" value="1"/>
</dbReference>
<dbReference type="Gene3D" id="3.40.50.620">
    <property type="entry name" value="HUPs"/>
    <property type="match status" value="1"/>
</dbReference>
<dbReference type="HAMAP" id="MF_00344">
    <property type="entry name" value="GMP_synthase"/>
    <property type="match status" value="1"/>
</dbReference>
<dbReference type="InterPro" id="IPR029062">
    <property type="entry name" value="Class_I_gatase-like"/>
</dbReference>
<dbReference type="InterPro" id="IPR017926">
    <property type="entry name" value="GATASE"/>
</dbReference>
<dbReference type="InterPro" id="IPR001674">
    <property type="entry name" value="GMP_synth_C"/>
</dbReference>
<dbReference type="InterPro" id="IPR004739">
    <property type="entry name" value="GMP_synth_GATase"/>
</dbReference>
<dbReference type="InterPro" id="IPR022955">
    <property type="entry name" value="GMP_synthase"/>
</dbReference>
<dbReference type="InterPro" id="IPR025777">
    <property type="entry name" value="GMPS_ATP_PPase_dom"/>
</dbReference>
<dbReference type="InterPro" id="IPR022310">
    <property type="entry name" value="NAD/GMP_synthase"/>
</dbReference>
<dbReference type="InterPro" id="IPR014729">
    <property type="entry name" value="Rossmann-like_a/b/a_fold"/>
</dbReference>
<dbReference type="NCBIfam" id="TIGR00884">
    <property type="entry name" value="guaA_Cterm"/>
    <property type="match status" value="1"/>
</dbReference>
<dbReference type="NCBIfam" id="TIGR00888">
    <property type="entry name" value="guaA_Nterm"/>
    <property type="match status" value="1"/>
</dbReference>
<dbReference type="NCBIfam" id="NF000848">
    <property type="entry name" value="PRK00074.1"/>
    <property type="match status" value="1"/>
</dbReference>
<dbReference type="PANTHER" id="PTHR11922:SF2">
    <property type="entry name" value="GMP SYNTHASE [GLUTAMINE-HYDROLYZING]"/>
    <property type="match status" value="1"/>
</dbReference>
<dbReference type="PANTHER" id="PTHR11922">
    <property type="entry name" value="GMP SYNTHASE-RELATED"/>
    <property type="match status" value="1"/>
</dbReference>
<dbReference type="Pfam" id="PF00117">
    <property type="entry name" value="GATase"/>
    <property type="match status" value="1"/>
</dbReference>
<dbReference type="Pfam" id="PF00958">
    <property type="entry name" value="GMP_synt_C"/>
    <property type="match status" value="1"/>
</dbReference>
<dbReference type="Pfam" id="PF02540">
    <property type="entry name" value="NAD_synthase"/>
    <property type="match status" value="1"/>
</dbReference>
<dbReference type="PRINTS" id="PR00097">
    <property type="entry name" value="ANTSNTHASEII"/>
</dbReference>
<dbReference type="PRINTS" id="PR00099">
    <property type="entry name" value="CPSGATASE"/>
</dbReference>
<dbReference type="PRINTS" id="PR00096">
    <property type="entry name" value="GATASE"/>
</dbReference>
<dbReference type="SUPFAM" id="SSF52402">
    <property type="entry name" value="Adenine nucleotide alpha hydrolases-like"/>
    <property type="match status" value="1"/>
</dbReference>
<dbReference type="SUPFAM" id="SSF52317">
    <property type="entry name" value="Class I glutamine amidotransferase-like"/>
    <property type="match status" value="1"/>
</dbReference>
<dbReference type="SUPFAM" id="SSF54810">
    <property type="entry name" value="GMP synthetase C-terminal dimerisation domain"/>
    <property type="match status" value="1"/>
</dbReference>
<dbReference type="PROSITE" id="PS51273">
    <property type="entry name" value="GATASE_TYPE_1"/>
    <property type="match status" value="1"/>
</dbReference>
<dbReference type="PROSITE" id="PS51553">
    <property type="entry name" value="GMPS_ATP_PPASE"/>
    <property type="match status" value="1"/>
</dbReference>
<feature type="chain" id="PRO_1000133391" description="GMP synthase [glutamine-hydrolyzing]">
    <location>
        <begin position="1"/>
        <end position="517"/>
    </location>
</feature>
<feature type="domain" description="Glutamine amidotransferase type-1" evidence="1">
    <location>
        <begin position="9"/>
        <end position="199"/>
    </location>
</feature>
<feature type="domain" description="GMPS ATP-PPase" evidence="1">
    <location>
        <begin position="200"/>
        <end position="392"/>
    </location>
</feature>
<feature type="active site" description="Nucleophile" evidence="1">
    <location>
        <position position="86"/>
    </location>
</feature>
<feature type="active site" evidence="1">
    <location>
        <position position="173"/>
    </location>
</feature>
<feature type="active site" evidence="1">
    <location>
        <position position="175"/>
    </location>
</feature>
<feature type="binding site" evidence="1">
    <location>
        <begin position="227"/>
        <end position="233"/>
    </location>
    <ligand>
        <name>ATP</name>
        <dbReference type="ChEBI" id="CHEBI:30616"/>
    </ligand>
</feature>
<name>GUAA_VIBA3</name>
<sequence>MTKNIHDQRILILDFGSQYTQLVARRIREIGVYCELWSWDVEEADIREFNPDGIILSGGPESVTEENSPRAPQYVFDSGVPVFGICYGMQTMAEQLGGKVATSTEREFGYAAVQVTGESALFADLETTQDVWMSHGDKVVEIPADFTKIAETDTCPYAAMANEEKKYYGVQFHPEVTHTKNGLKMLENFVLNACGCEGLWTSASIIEDAVARIKEQVGDDEVILGLSGGVDSSVVAMLAHRAIGDKLTCVFVDNGLLRLNEGEQVMEMFGDQFGLNIIKVDAEDRFLDALEGEAEPEAKRKIIGHVFVDIFDEESKKLKNAKWLAQGTIYPDVIESAASKTGKAHVIKSHHNVGGLPDDMEMGLVEPLRELFKDEVRKIGLELGLPYNMLYRHPFPGPGLGVRVLGEVKKEYCDLLRRADAIFIEELHAADLYHKVSQAFTVFLPVRSVGVMGDGRKYDWVVSLRAVETIDFMTAHWAHLPYDFLGKVSNRIINEVNGISRVVYDISGKPPATIEWE</sequence>
<accession>B7VJU8</accession>
<evidence type="ECO:0000255" key="1">
    <source>
        <dbReference type="HAMAP-Rule" id="MF_00344"/>
    </source>
</evidence>
<comment type="function">
    <text evidence="1">Catalyzes the synthesis of GMP from XMP.</text>
</comment>
<comment type="catalytic activity">
    <reaction evidence="1">
        <text>XMP + L-glutamine + ATP + H2O = GMP + L-glutamate + AMP + diphosphate + 2 H(+)</text>
        <dbReference type="Rhea" id="RHEA:11680"/>
        <dbReference type="ChEBI" id="CHEBI:15377"/>
        <dbReference type="ChEBI" id="CHEBI:15378"/>
        <dbReference type="ChEBI" id="CHEBI:29985"/>
        <dbReference type="ChEBI" id="CHEBI:30616"/>
        <dbReference type="ChEBI" id="CHEBI:33019"/>
        <dbReference type="ChEBI" id="CHEBI:57464"/>
        <dbReference type="ChEBI" id="CHEBI:58115"/>
        <dbReference type="ChEBI" id="CHEBI:58359"/>
        <dbReference type="ChEBI" id="CHEBI:456215"/>
        <dbReference type="EC" id="6.3.5.2"/>
    </reaction>
</comment>
<comment type="pathway">
    <text evidence="1">Purine metabolism; GMP biosynthesis; GMP from XMP (L-Gln route): step 1/1.</text>
</comment>
<comment type="subunit">
    <text evidence="1">Homodimer.</text>
</comment>
<proteinExistence type="inferred from homology"/>
<keyword id="KW-0067">ATP-binding</keyword>
<keyword id="KW-0315">Glutamine amidotransferase</keyword>
<keyword id="KW-0332">GMP biosynthesis</keyword>
<keyword id="KW-0436">Ligase</keyword>
<keyword id="KW-0547">Nucleotide-binding</keyword>
<keyword id="KW-0658">Purine biosynthesis</keyword>